<reference key="1">
    <citation type="submission" date="2007-06" db="EMBL/GenBank/DDBJ databases">
        <title>Complete sequence of Clostridium beijerinckii NCIMB 8052.</title>
        <authorList>
            <consortium name="US DOE Joint Genome Institute"/>
            <person name="Copeland A."/>
            <person name="Lucas S."/>
            <person name="Lapidus A."/>
            <person name="Barry K."/>
            <person name="Detter J.C."/>
            <person name="Glavina del Rio T."/>
            <person name="Hammon N."/>
            <person name="Israni S."/>
            <person name="Dalin E."/>
            <person name="Tice H."/>
            <person name="Pitluck S."/>
            <person name="Sims D."/>
            <person name="Brettin T."/>
            <person name="Bruce D."/>
            <person name="Tapia R."/>
            <person name="Brainard J."/>
            <person name="Schmutz J."/>
            <person name="Larimer F."/>
            <person name="Land M."/>
            <person name="Hauser L."/>
            <person name="Kyrpides N."/>
            <person name="Mikhailova N."/>
            <person name="Bennet G."/>
            <person name="Cann I."/>
            <person name="Chen J.-S."/>
            <person name="Contreras A.L."/>
            <person name="Jones D."/>
            <person name="Kashket E."/>
            <person name="Mitchell W."/>
            <person name="Stoddard S."/>
            <person name="Schwarz W."/>
            <person name="Qureshi N."/>
            <person name="Young M."/>
            <person name="Shi Z."/>
            <person name="Ezeji T."/>
            <person name="White B."/>
            <person name="Blaschek H."/>
            <person name="Richardson P."/>
        </authorList>
    </citation>
    <scope>NUCLEOTIDE SEQUENCE [LARGE SCALE GENOMIC DNA]</scope>
    <source>
        <strain>ATCC 51743 / NCIMB 8052</strain>
    </source>
</reference>
<proteinExistence type="inferred from homology"/>
<keyword id="KW-0328">Glycosyltransferase</keyword>
<keyword id="KW-0694">RNA-binding</keyword>
<keyword id="KW-0804">Transcription</keyword>
<keyword id="KW-0805">Transcription regulation</keyword>
<keyword id="KW-0806">Transcription termination</keyword>
<keyword id="KW-0808">Transferase</keyword>
<accession>A6LTU0</accession>
<organism>
    <name type="scientific">Clostridium beijerinckii (strain ATCC 51743 / NCIMB 8052)</name>
    <name type="common">Clostridium acetobutylicum</name>
    <dbReference type="NCBI Taxonomy" id="290402"/>
    <lineage>
        <taxon>Bacteria</taxon>
        <taxon>Bacillati</taxon>
        <taxon>Bacillota</taxon>
        <taxon>Clostridia</taxon>
        <taxon>Eubacteriales</taxon>
        <taxon>Clostridiaceae</taxon>
        <taxon>Clostridium</taxon>
    </lineage>
</organism>
<gene>
    <name evidence="1" type="primary">pyrR</name>
    <name type="ordered locus">Cbei_1596</name>
</gene>
<feature type="chain" id="PRO_1000085649" description="Bifunctional protein PyrR">
    <location>
        <begin position="1"/>
        <end position="178"/>
    </location>
</feature>
<feature type="short sequence motif" description="PRPP-binding" evidence="1">
    <location>
        <begin position="99"/>
        <end position="111"/>
    </location>
</feature>
<comment type="function">
    <text evidence="1">Regulates transcriptional attenuation of the pyrimidine nucleotide (pyr) operon by binding in a uridine-dependent manner to specific sites on pyr mRNA. This disrupts an antiterminator hairpin in the RNA and favors formation of a downstream transcription terminator, leading to a reduced expression of downstream genes.</text>
</comment>
<comment type="function">
    <text evidence="1">Also displays a weak uracil phosphoribosyltransferase activity which is not physiologically significant.</text>
</comment>
<comment type="catalytic activity">
    <reaction evidence="1">
        <text>UMP + diphosphate = 5-phospho-alpha-D-ribose 1-diphosphate + uracil</text>
        <dbReference type="Rhea" id="RHEA:13017"/>
        <dbReference type="ChEBI" id="CHEBI:17568"/>
        <dbReference type="ChEBI" id="CHEBI:33019"/>
        <dbReference type="ChEBI" id="CHEBI:57865"/>
        <dbReference type="ChEBI" id="CHEBI:58017"/>
        <dbReference type="EC" id="2.4.2.9"/>
    </reaction>
</comment>
<comment type="subunit">
    <text evidence="1">Homodimer and homohexamer; in equilibrium.</text>
</comment>
<comment type="similarity">
    <text evidence="1">Belongs to the purine/pyrimidine phosphoribosyltransferase family. PyrR subfamily.</text>
</comment>
<name>PYRR_CLOB8</name>
<protein>
    <recommendedName>
        <fullName evidence="1">Bifunctional protein PyrR</fullName>
    </recommendedName>
    <domain>
        <recommendedName>
            <fullName evidence="1">Pyrimidine operon regulatory protein</fullName>
        </recommendedName>
    </domain>
    <domain>
        <recommendedName>
            <fullName evidence="1">Uracil phosphoribosyltransferase</fullName>
            <shortName evidence="1">UPRTase</shortName>
            <ecNumber evidence="1">2.4.2.9</ecNumber>
        </recommendedName>
    </domain>
</protein>
<dbReference type="EC" id="2.4.2.9" evidence="1"/>
<dbReference type="EMBL" id="CP000721">
    <property type="protein sequence ID" value="ABR33770.1"/>
    <property type="molecule type" value="Genomic_DNA"/>
</dbReference>
<dbReference type="RefSeq" id="WP_011968922.1">
    <property type="nucleotide sequence ID" value="NC_009617.1"/>
</dbReference>
<dbReference type="SMR" id="A6LTU0"/>
<dbReference type="KEGG" id="cbe:Cbei_1596"/>
<dbReference type="eggNOG" id="COG2065">
    <property type="taxonomic scope" value="Bacteria"/>
</dbReference>
<dbReference type="HOGENOM" id="CLU_094234_2_1_9"/>
<dbReference type="Proteomes" id="UP000000565">
    <property type="component" value="Chromosome"/>
</dbReference>
<dbReference type="GO" id="GO:0003723">
    <property type="term" value="F:RNA binding"/>
    <property type="evidence" value="ECO:0007669"/>
    <property type="project" value="UniProtKB-UniRule"/>
</dbReference>
<dbReference type="GO" id="GO:0004845">
    <property type="term" value="F:uracil phosphoribosyltransferase activity"/>
    <property type="evidence" value="ECO:0007669"/>
    <property type="project" value="UniProtKB-UniRule"/>
</dbReference>
<dbReference type="GO" id="GO:0006353">
    <property type="term" value="P:DNA-templated transcription termination"/>
    <property type="evidence" value="ECO:0007669"/>
    <property type="project" value="UniProtKB-UniRule"/>
</dbReference>
<dbReference type="FunFam" id="3.40.50.2020:FF:000020">
    <property type="entry name" value="Bifunctional protein PyrR"/>
    <property type="match status" value="1"/>
</dbReference>
<dbReference type="Gene3D" id="3.40.50.2020">
    <property type="match status" value="1"/>
</dbReference>
<dbReference type="HAMAP" id="MF_01219">
    <property type="entry name" value="PyrR"/>
    <property type="match status" value="1"/>
</dbReference>
<dbReference type="InterPro" id="IPR000836">
    <property type="entry name" value="PRibTrfase_dom"/>
</dbReference>
<dbReference type="InterPro" id="IPR029057">
    <property type="entry name" value="PRTase-like"/>
</dbReference>
<dbReference type="InterPro" id="IPR023050">
    <property type="entry name" value="PyrR"/>
</dbReference>
<dbReference type="InterPro" id="IPR050137">
    <property type="entry name" value="PyrR_bifunctional"/>
</dbReference>
<dbReference type="NCBIfam" id="NF003548">
    <property type="entry name" value="PRK05205.1-4"/>
    <property type="match status" value="1"/>
</dbReference>
<dbReference type="NCBIfam" id="NF003549">
    <property type="entry name" value="PRK05205.1-5"/>
    <property type="match status" value="1"/>
</dbReference>
<dbReference type="PANTHER" id="PTHR11608">
    <property type="entry name" value="BIFUNCTIONAL PROTEIN PYRR"/>
    <property type="match status" value="1"/>
</dbReference>
<dbReference type="PANTHER" id="PTHR11608:SF0">
    <property type="entry name" value="BIFUNCTIONAL PROTEIN PYRR"/>
    <property type="match status" value="1"/>
</dbReference>
<dbReference type="Pfam" id="PF00156">
    <property type="entry name" value="Pribosyltran"/>
    <property type="match status" value="1"/>
</dbReference>
<dbReference type="SUPFAM" id="SSF53271">
    <property type="entry name" value="PRTase-like"/>
    <property type="match status" value="1"/>
</dbReference>
<sequence>MKLKSVLLDEKAVNRTLIRISHEIIERNKGIDELVLLGIKTRGYPLAKRIASYIKGIEGVDVPVGSVDITLYRDDLTKISEDLEIKNLDLGLEIKDKKIIIIDDVLYTCRTARAAIDAIMDVNRPRGIQLAVLIDRGHKELPIRADYVGKNIPTSKNEVIAVSLKEIDGEDSVKIFDK</sequence>
<evidence type="ECO:0000255" key="1">
    <source>
        <dbReference type="HAMAP-Rule" id="MF_01219"/>
    </source>
</evidence>